<dbReference type="EC" id="2.7.1.40" evidence="4"/>
<dbReference type="EMBL" id="CR861086">
    <property type="protein sequence ID" value="CAH93166.1"/>
    <property type="molecule type" value="mRNA"/>
</dbReference>
<dbReference type="EMBL" id="CR925988">
    <property type="protein sequence ID" value="CAI29633.1"/>
    <property type="molecule type" value="mRNA"/>
</dbReference>
<dbReference type="RefSeq" id="NP_001127083.1">
    <property type="nucleotide sequence ID" value="NM_001133611.1"/>
</dbReference>
<dbReference type="SMR" id="Q5NVN0"/>
<dbReference type="STRING" id="9601.ENSPPYP00000007498"/>
<dbReference type="GeneID" id="100174114"/>
<dbReference type="KEGG" id="pon:100174114"/>
<dbReference type="CTD" id="5315"/>
<dbReference type="eggNOG" id="KOG2323">
    <property type="taxonomic scope" value="Eukaryota"/>
</dbReference>
<dbReference type="InParanoid" id="Q5NVN0"/>
<dbReference type="OrthoDB" id="108365at2759"/>
<dbReference type="UniPathway" id="UPA00109">
    <property type="reaction ID" value="UER00188"/>
</dbReference>
<dbReference type="Proteomes" id="UP000001595">
    <property type="component" value="Unplaced"/>
</dbReference>
<dbReference type="GO" id="GO:0005791">
    <property type="term" value="C:rough endoplasmic reticulum"/>
    <property type="evidence" value="ECO:0000250"/>
    <property type="project" value="UniProtKB"/>
</dbReference>
<dbReference type="GO" id="GO:0005524">
    <property type="term" value="F:ATP binding"/>
    <property type="evidence" value="ECO:0007669"/>
    <property type="project" value="UniProtKB-KW"/>
</dbReference>
<dbReference type="GO" id="GO:0016301">
    <property type="term" value="F:kinase activity"/>
    <property type="evidence" value="ECO:0007669"/>
    <property type="project" value="UniProtKB-KW"/>
</dbReference>
<dbReference type="GO" id="GO:0000287">
    <property type="term" value="F:magnesium ion binding"/>
    <property type="evidence" value="ECO:0007669"/>
    <property type="project" value="InterPro"/>
</dbReference>
<dbReference type="GO" id="GO:0003729">
    <property type="term" value="F:mRNA binding"/>
    <property type="evidence" value="ECO:0000250"/>
    <property type="project" value="UniProtKB"/>
</dbReference>
<dbReference type="GO" id="GO:0030955">
    <property type="term" value="F:potassium ion binding"/>
    <property type="evidence" value="ECO:0007669"/>
    <property type="project" value="InterPro"/>
</dbReference>
<dbReference type="GO" id="GO:0004743">
    <property type="term" value="F:pyruvate kinase activity"/>
    <property type="evidence" value="ECO:0007669"/>
    <property type="project" value="UniProtKB-EC"/>
</dbReference>
<dbReference type="GO" id="GO:2000767">
    <property type="term" value="P:positive regulation of cytoplasmic translation"/>
    <property type="evidence" value="ECO:0000250"/>
    <property type="project" value="UniProtKB"/>
</dbReference>
<dbReference type="GO" id="GO:1903672">
    <property type="term" value="P:positive regulation of sprouting angiogenesis"/>
    <property type="evidence" value="ECO:0000250"/>
    <property type="project" value="UniProtKB"/>
</dbReference>
<dbReference type="CDD" id="cd00288">
    <property type="entry name" value="Pyruvate_Kinase"/>
    <property type="match status" value="1"/>
</dbReference>
<dbReference type="FunFam" id="3.20.20.60:FF:000025">
    <property type="entry name" value="Pyruvate kinase"/>
    <property type="match status" value="1"/>
</dbReference>
<dbReference type="FunFam" id="3.40.1380.20:FF:000001">
    <property type="entry name" value="Pyruvate kinase"/>
    <property type="match status" value="1"/>
</dbReference>
<dbReference type="FunFam" id="3.40.1380.20:FF:000002">
    <property type="entry name" value="Pyruvate kinase"/>
    <property type="match status" value="1"/>
</dbReference>
<dbReference type="FunFam" id="2.40.33.10:FF:000023">
    <property type="entry name" value="Pyruvate kinase PKM"/>
    <property type="match status" value="1"/>
</dbReference>
<dbReference type="Gene3D" id="3.20.20.60">
    <property type="entry name" value="Phosphoenolpyruvate-binding domains"/>
    <property type="match status" value="1"/>
</dbReference>
<dbReference type="Gene3D" id="2.40.33.10">
    <property type="entry name" value="PK beta-barrel domain-like"/>
    <property type="match status" value="1"/>
</dbReference>
<dbReference type="Gene3D" id="3.40.1380.20">
    <property type="entry name" value="Pyruvate kinase, C-terminal domain"/>
    <property type="match status" value="2"/>
</dbReference>
<dbReference type="InterPro" id="IPR001697">
    <property type="entry name" value="Pyr_Knase"/>
</dbReference>
<dbReference type="InterPro" id="IPR015813">
    <property type="entry name" value="Pyrv/PenolPyrv_kinase-like_dom"/>
</dbReference>
<dbReference type="InterPro" id="IPR040442">
    <property type="entry name" value="Pyrv_kinase-like_dom_sf"/>
</dbReference>
<dbReference type="InterPro" id="IPR011037">
    <property type="entry name" value="Pyrv_Knase-like_insert_dom_sf"/>
</dbReference>
<dbReference type="InterPro" id="IPR018209">
    <property type="entry name" value="Pyrv_Knase_AS"/>
</dbReference>
<dbReference type="InterPro" id="IPR015793">
    <property type="entry name" value="Pyrv_Knase_brl"/>
</dbReference>
<dbReference type="InterPro" id="IPR015795">
    <property type="entry name" value="Pyrv_Knase_C"/>
</dbReference>
<dbReference type="InterPro" id="IPR036918">
    <property type="entry name" value="Pyrv_Knase_C_sf"/>
</dbReference>
<dbReference type="InterPro" id="IPR015806">
    <property type="entry name" value="Pyrv_Knase_insert_dom_sf"/>
</dbReference>
<dbReference type="NCBIfam" id="NF004491">
    <property type="entry name" value="PRK05826.1"/>
    <property type="match status" value="1"/>
</dbReference>
<dbReference type="NCBIfam" id="NF004978">
    <property type="entry name" value="PRK06354.1"/>
    <property type="match status" value="1"/>
</dbReference>
<dbReference type="NCBIfam" id="TIGR01064">
    <property type="entry name" value="pyruv_kin"/>
    <property type="match status" value="1"/>
</dbReference>
<dbReference type="PANTHER" id="PTHR11817">
    <property type="entry name" value="PYRUVATE KINASE"/>
    <property type="match status" value="1"/>
</dbReference>
<dbReference type="Pfam" id="PF00224">
    <property type="entry name" value="PK"/>
    <property type="match status" value="1"/>
</dbReference>
<dbReference type="Pfam" id="PF02887">
    <property type="entry name" value="PK_C"/>
    <property type="match status" value="1"/>
</dbReference>
<dbReference type="PRINTS" id="PR01050">
    <property type="entry name" value="PYRUVTKNASE"/>
</dbReference>
<dbReference type="SUPFAM" id="SSF51621">
    <property type="entry name" value="Phosphoenolpyruvate/pyruvate domain"/>
    <property type="match status" value="1"/>
</dbReference>
<dbReference type="SUPFAM" id="SSF50800">
    <property type="entry name" value="PK beta-barrel domain-like"/>
    <property type="match status" value="1"/>
</dbReference>
<dbReference type="SUPFAM" id="SSF52935">
    <property type="entry name" value="PK C-terminal domain-like"/>
    <property type="match status" value="1"/>
</dbReference>
<dbReference type="PROSITE" id="PS00110">
    <property type="entry name" value="PYRUVATE_KINASE"/>
    <property type="match status" value="1"/>
</dbReference>
<gene>
    <name type="primary">PKM</name>
    <name type="synonym">PKM2</name>
</gene>
<name>KPYM_PONAB</name>
<reference key="1">
    <citation type="submission" date="2004-11" db="EMBL/GenBank/DDBJ databases">
        <authorList>
            <consortium name="The German cDNA consortium"/>
        </authorList>
    </citation>
    <scope>NUCLEOTIDE SEQUENCE [LARGE SCALE MRNA]</scope>
    <source>
        <tissue>Brain cortex</tissue>
    </source>
</reference>
<keyword id="KW-0007">Acetylation</keyword>
<keyword id="KW-0021">Allosteric enzyme</keyword>
<keyword id="KW-0067">ATP-binding</keyword>
<keyword id="KW-0963">Cytoplasm</keyword>
<keyword id="KW-0324">Glycolysis</keyword>
<keyword id="KW-1017">Isopeptide bond</keyword>
<keyword id="KW-0418">Kinase</keyword>
<keyword id="KW-0460">Magnesium</keyword>
<keyword id="KW-0479">Metal-binding</keyword>
<keyword id="KW-0488">Methylation</keyword>
<keyword id="KW-0547">Nucleotide-binding</keyword>
<keyword id="KW-0597">Phosphoprotein</keyword>
<keyword id="KW-0630">Potassium</keyword>
<keyword id="KW-0670">Pyruvate</keyword>
<keyword id="KW-1185">Reference proteome</keyword>
<keyword id="KW-0808">Transferase</keyword>
<keyword id="KW-0810">Translation regulation</keyword>
<keyword id="KW-0832">Ubl conjugation</keyword>
<accession>Q5NVN0</accession>
<accession>Q5R500</accession>
<protein>
    <recommendedName>
        <fullName>Pyruvate kinase PKM</fullName>
        <ecNumber evidence="4">2.7.1.40</ecNumber>
    </recommendedName>
    <alternativeName>
        <fullName>Pyruvate kinase muscle isozyme</fullName>
    </alternativeName>
</protein>
<feature type="initiator methionine" description="Removed" evidence="2">
    <location>
        <position position="1"/>
    </location>
</feature>
<feature type="chain" id="PRO_0000112090" description="Pyruvate kinase PKM">
    <location>
        <begin position="2"/>
        <end position="531"/>
    </location>
</feature>
<feature type="region of interest" description="Interaction with POU5F1" evidence="4">
    <location>
        <begin position="307"/>
        <end position="531"/>
    </location>
</feature>
<feature type="region of interest" description="Intersubunit contact">
    <location>
        <begin position="389"/>
        <end position="433"/>
    </location>
</feature>
<feature type="binding site" evidence="4">
    <location>
        <position position="70"/>
    </location>
    <ligand>
        <name>L-serine</name>
        <dbReference type="ChEBI" id="CHEBI:33384"/>
    </ligand>
</feature>
<feature type="binding site" evidence="5">
    <location>
        <position position="73"/>
    </location>
    <ligand>
        <name>substrate</name>
    </ligand>
</feature>
<feature type="binding site" evidence="4">
    <location>
        <begin position="75"/>
        <end position="78"/>
    </location>
    <ligand>
        <name>ATP</name>
        <dbReference type="ChEBI" id="CHEBI:30616"/>
    </ligand>
</feature>
<feature type="binding site" evidence="4">
    <location>
        <position position="75"/>
    </location>
    <ligand>
        <name>K(+)</name>
        <dbReference type="ChEBI" id="CHEBI:29103"/>
    </ligand>
</feature>
<feature type="binding site" evidence="4">
    <location>
        <position position="77"/>
    </location>
    <ligand>
        <name>K(+)</name>
        <dbReference type="ChEBI" id="CHEBI:29103"/>
    </ligand>
</feature>
<feature type="binding site" evidence="4">
    <location>
        <position position="106"/>
    </location>
    <ligand>
        <name>L-serine</name>
        <dbReference type="ChEBI" id="CHEBI:33384"/>
    </ligand>
</feature>
<feature type="binding site" evidence="4">
    <location>
        <position position="113"/>
    </location>
    <ligand>
        <name>K(+)</name>
        <dbReference type="ChEBI" id="CHEBI:29103"/>
    </ligand>
</feature>
<feature type="binding site" evidence="4">
    <location>
        <position position="114"/>
    </location>
    <ligand>
        <name>K(+)</name>
        <dbReference type="ChEBI" id="CHEBI:29103"/>
    </ligand>
</feature>
<feature type="binding site" evidence="4">
    <location>
        <position position="120"/>
    </location>
    <ligand>
        <name>ATP</name>
        <dbReference type="ChEBI" id="CHEBI:30616"/>
    </ligand>
</feature>
<feature type="binding site" evidence="4">
    <location>
        <position position="207"/>
    </location>
    <ligand>
        <name>ATP</name>
        <dbReference type="ChEBI" id="CHEBI:30616"/>
    </ligand>
</feature>
<feature type="binding site" evidence="5">
    <location>
        <position position="270"/>
    </location>
    <ligand>
        <name>substrate</name>
    </ligand>
</feature>
<feature type="binding site" evidence="4">
    <location>
        <position position="272"/>
    </location>
    <ligand>
        <name>Mg(2+)</name>
        <dbReference type="ChEBI" id="CHEBI:18420"/>
    </ligand>
</feature>
<feature type="binding site" evidence="5">
    <location>
        <position position="295"/>
    </location>
    <ligand>
        <name>substrate</name>
    </ligand>
</feature>
<feature type="binding site" evidence="4">
    <location>
        <position position="296"/>
    </location>
    <ligand>
        <name>Mg(2+)</name>
        <dbReference type="ChEBI" id="CHEBI:18420"/>
    </ligand>
</feature>
<feature type="binding site" evidence="5">
    <location>
        <position position="296"/>
    </location>
    <ligand>
        <name>substrate</name>
    </ligand>
</feature>
<feature type="binding site" evidence="5">
    <location>
        <position position="328"/>
    </location>
    <ligand>
        <name>substrate</name>
    </ligand>
</feature>
<feature type="binding site" evidence="4">
    <location>
        <begin position="432"/>
        <end position="437"/>
    </location>
    <ligand>
        <name>beta-D-fructose 1,6-bisphosphate</name>
        <dbReference type="ChEBI" id="CHEBI:32966"/>
        <note>allosteric activator</note>
    </ligand>
</feature>
<feature type="binding site" evidence="4">
    <location>
        <position position="464"/>
    </location>
    <ligand>
        <name>L-serine</name>
        <dbReference type="ChEBI" id="CHEBI:33384"/>
    </ligand>
</feature>
<feature type="binding site" evidence="4">
    <location>
        <position position="482"/>
    </location>
    <ligand>
        <name>beta-D-fructose 1,6-bisphosphate</name>
        <dbReference type="ChEBI" id="CHEBI:32966"/>
        <note>allosteric activator</note>
    </ligand>
</feature>
<feature type="binding site" evidence="4">
    <location>
        <position position="489"/>
    </location>
    <ligand>
        <name>beta-D-fructose 1,6-bisphosphate</name>
        <dbReference type="ChEBI" id="CHEBI:32966"/>
        <note>allosteric activator</note>
    </ligand>
</feature>
<feature type="binding site" evidence="4">
    <location>
        <begin position="516"/>
        <end position="521"/>
    </location>
    <ligand>
        <name>beta-D-fructose 1,6-bisphosphate</name>
        <dbReference type="ChEBI" id="CHEBI:32966"/>
        <note>allosteric activator</note>
    </ligand>
</feature>
<feature type="site" description="Transition state stabilizer" evidence="1">
    <location>
        <position position="270"/>
    </location>
</feature>
<feature type="modified residue" description="N-acetylserine" evidence="2">
    <location>
        <position position="2"/>
    </location>
</feature>
<feature type="modified residue" description="N6,N6,N6-trimethyllysine" evidence="4">
    <location>
        <position position="3"/>
    </location>
</feature>
<feature type="modified residue" description="Phosphoserine" evidence="4">
    <location>
        <position position="37"/>
    </location>
</feature>
<feature type="modified residue" description="Phosphothreonine" evidence="4">
    <location>
        <position position="41"/>
    </location>
</feature>
<feature type="modified residue" description="N6-acetyllysine" evidence="4">
    <location>
        <position position="62"/>
    </location>
</feature>
<feature type="modified residue" description="N6-succinyllysine" evidence="6">
    <location>
        <position position="66"/>
    </location>
</feature>
<feature type="modified residue" description="N6-acetyllysine" evidence="4">
    <location>
        <position position="89"/>
    </location>
</feature>
<feature type="modified residue" description="Phosphoserine" evidence="3">
    <location>
        <position position="97"/>
    </location>
</feature>
<feature type="modified residue" description="Phosphoserine" evidence="3">
    <location>
        <position position="100"/>
    </location>
</feature>
<feature type="modified residue" description="Phosphotyrosine" evidence="4">
    <location>
        <position position="105"/>
    </location>
</feature>
<feature type="modified residue" description="Phosphoserine" evidence="4">
    <location>
        <position position="127"/>
    </location>
</feature>
<feature type="modified residue" description="Phosphotyrosine" evidence="6">
    <location>
        <position position="148"/>
    </location>
</feature>
<feature type="modified residue" description="N6-acetyllysine; alternate" evidence="4">
    <location>
        <position position="166"/>
    </location>
</feature>
<feature type="modified residue" description="N6-succinyllysine; alternate" evidence="6">
    <location>
        <position position="166"/>
    </location>
</feature>
<feature type="modified residue" description="Phosphotyrosine" evidence="4">
    <location>
        <position position="175"/>
    </location>
</feature>
<feature type="modified residue" description="Phosphothreonine" evidence="4">
    <location>
        <position position="195"/>
    </location>
</feature>
<feature type="modified residue" description="N6-acetyllysine; alternate" evidence="4">
    <location>
        <position position="266"/>
    </location>
</feature>
<feature type="modified residue" description="N6-acetyllysine; alternate" evidence="6">
    <location>
        <position position="270"/>
    </location>
</feature>
<feature type="modified residue" description="N6-acetyllysine" evidence="4">
    <location>
        <position position="305"/>
    </location>
</feature>
<feature type="modified residue" description="N6-acetyllysine; alternate" evidence="6">
    <location>
        <position position="322"/>
    </location>
</feature>
<feature type="modified residue" description="N6-succinyllysine; alternate" evidence="6">
    <location>
        <position position="322"/>
    </location>
</feature>
<feature type="modified residue" description="N6-acetyllysine" evidence="6">
    <location>
        <position position="475"/>
    </location>
</feature>
<feature type="modified residue" description="N6-succinyllysine" evidence="6">
    <location>
        <position position="498"/>
    </location>
</feature>
<feature type="cross-link" description="Glycyl lysine isopeptide (Lys-Gly) (interchain with G-Cter in SUMO2)" evidence="4">
    <location>
        <position position="115"/>
    </location>
</feature>
<feature type="cross-link" description="Glycyl lysine isopeptide (Lys-Gly) (interchain with G-Cter in SUMO1); alternate" evidence="4">
    <location>
        <position position="166"/>
    </location>
</feature>
<feature type="cross-link" description="Glycyl lysine isopeptide (Lys-Gly) (interchain with G-Cter in SUMO2); alternate" evidence="4">
    <location>
        <position position="266"/>
    </location>
</feature>
<feature type="cross-link" description="Glycyl lysine isopeptide (Lys-Gly) (interchain with G-Cter in SUMO2); alternate" evidence="4">
    <location>
        <position position="270"/>
    </location>
</feature>
<feature type="sequence conflict" description="In Ref. 1; CAH93166." evidence="7" ref="1">
    <original>D</original>
    <variation>G</variation>
    <location>
        <position position="153"/>
    </location>
</feature>
<feature type="sequence conflict" description="In Ref. 1; CAH93166." evidence="7" ref="1">
    <original>Q</original>
    <variation>R</variation>
    <location>
        <position position="329"/>
    </location>
</feature>
<feature type="sequence conflict" description="In Ref. 1; CAH93166." evidence="7" ref="1">
    <original>G</original>
    <variation>D</variation>
    <location>
        <position position="347"/>
    </location>
</feature>
<comment type="function">
    <text evidence="4">Catalyzes the final rate-limiting step of glycolysis by mediating the transfer of a phosphoryl group from phosphoenolpyruvate (PEP) to ADP, generating ATP. The ratio between the highly active tetrameric form and nearly inactive dimeric form determines whether glucose carbons are channeled to biosynthetic processes or used for glycolytic ATP production. The transition between the 2 forms contributes to the control of glycolysis and is important for tumor cell proliferation and survival.</text>
</comment>
<comment type="catalytic activity">
    <reaction evidence="4">
        <text>pyruvate + ATP = phosphoenolpyruvate + ADP + H(+)</text>
        <dbReference type="Rhea" id="RHEA:18157"/>
        <dbReference type="ChEBI" id="CHEBI:15361"/>
        <dbReference type="ChEBI" id="CHEBI:15378"/>
        <dbReference type="ChEBI" id="CHEBI:30616"/>
        <dbReference type="ChEBI" id="CHEBI:58702"/>
        <dbReference type="ChEBI" id="CHEBI:456216"/>
        <dbReference type="EC" id="2.7.1.40"/>
    </reaction>
</comment>
<comment type="cofactor">
    <cofactor evidence="4">
        <name>Mg(2+)</name>
        <dbReference type="ChEBI" id="CHEBI:18420"/>
    </cofactor>
</comment>
<comment type="cofactor">
    <cofactor evidence="4">
        <name>K(+)</name>
        <dbReference type="ChEBI" id="CHEBI:29103"/>
    </cofactor>
</comment>
<comment type="activity regulation">
    <text evidence="4">Has high pyruvate kinase activity by itself and does not require allosteric activation by D-fructose 1,6-bisphosphate (FBP) for activity.</text>
</comment>
<comment type="pathway">
    <text evidence="4">Carbohydrate degradation; glycolysis; pyruvate from D-glyceraldehyde 3-phosphate: step 5/5.</text>
</comment>
<comment type="subcellular location">
    <subcellularLocation>
        <location evidence="4">Cytoplasm</location>
    </subcellularLocation>
</comment>
<comment type="PTM">
    <text evidence="4">ISGylated.</text>
</comment>
<comment type="PTM">
    <text evidence="4">Under hypoxia, hydroxylated by EGLN3.</text>
</comment>
<comment type="PTM">
    <text evidence="4">Acetylation at Lys-305 is stimulated by high glucose concentration, it decreases enzyme activity and promotes its lysosomal-dependent degradation via chaperone-mediated autophagy.</text>
</comment>
<comment type="PTM">
    <text evidence="4">FGFR1-dependent tyrosine phosphorylation is reduced by interaction with TRIM35.</text>
</comment>
<comment type="miscellaneous">
    <text evidence="4">There are 4 isozymes of pyruvate kinase in mammals (L, R, M1, M2) encoded by 2 different genes: PKLR and PKM. The L and R isozymes are generated from the PKLR by differential splicing of RNA; the M1 and M2 forms are produced from the PKM gene by differential splicing. L type is major isozyme in the liver, R is found in red cells, M1 is the main form in muscle, heart and brain, and M2 is found in early fetal tissues as well as in most cancer cells.</text>
</comment>
<comment type="similarity">
    <text evidence="7">Belongs to the pyruvate kinase family.</text>
</comment>
<proteinExistence type="evidence at transcript level"/>
<organism>
    <name type="scientific">Pongo abelii</name>
    <name type="common">Sumatran orangutan</name>
    <name type="synonym">Pongo pygmaeus abelii</name>
    <dbReference type="NCBI Taxonomy" id="9601"/>
    <lineage>
        <taxon>Eukaryota</taxon>
        <taxon>Metazoa</taxon>
        <taxon>Chordata</taxon>
        <taxon>Craniata</taxon>
        <taxon>Vertebrata</taxon>
        <taxon>Euteleostomi</taxon>
        <taxon>Mammalia</taxon>
        <taxon>Eutheria</taxon>
        <taxon>Euarchontoglires</taxon>
        <taxon>Primates</taxon>
        <taxon>Haplorrhini</taxon>
        <taxon>Catarrhini</taxon>
        <taxon>Hominidae</taxon>
        <taxon>Pongo</taxon>
    </lineage>
</organism>
<sequence length="531" mass="58018">MSKPHSEAGTAFIQTQQLHAAMADTFLEHMCRLDIDSPPITARNTGIICTIGPASRSVETLKEMIKSGMNVARLNFSHGTHEYHAETIKNVRTATESFASDPILYRPVAVALDTKGPEIRTGLIKGSGTAEVELKKGATLKITLDNAYMEKCDENILWLDYKNICKVVEVGSKIYVDDGLISLQVKQKGADFLLTEVENGGSLGSKKGVNLPGAAVDLPAVSEKDIQDLKFGVEQDVDMVFASFIRKASDVHEVRKVLGEKGKNIKIISKIENHEGVRRFDEILEASDGIMVARGDLGIEIPAEKVFLAQKMMIGRCNRAGKPVICATQMLESMIKKPRPTRAEGSGVANAVLDGADCIMLSGETAKGDYPLEAVRMQHLIAREAEAAMFHRKLFEELVRASSHSTDLMEAMAMGSVEASYKCLAAALIVLTESGRSAHQVARYRPRAPIIAVTRNPQTARQAHLYRGIFPVLCKDPVQEAWAEDVDLRVNFAMNVGKARGFFKKGDVVIVLTGWRPGSGFTNTMRVVPVP</sequence>
<evidence type="ECO:0000250" key="1">
    <source>
        <dbReference type="UniProtKB" id="P00549"/>
    </source>
</evidence>
<evidence type="ECO:0000250" key="2">
    <source>
        <dbReference type="UniProtKB" id="P11979"/>
    </source>
</evidence>
<evidence type="ECO:0000250" key="3">
    <source>
        <dbReference type="UniProtKB" id="P11980"/>
    </source>
</evidence>
<evidence type="ECO:0000250" key="4">
    <source>
        <dbReference type="UniProtKB" id="P14618"/>
    </source>
</evidence>
<evidence type="ECO:0000250" key="5">
    <source>
        <dbReference type="UniProtKB" id="P30613"/>
    </source>
</evidence>
<evidence type="ECO:0000250" key="6">
    <source>
        <dbReference type="UniProtKB" id="P52480"/>
    </source>
</evidence>
<evidence type="ECO:0000305" key="7"/>